<proteinExistence type="inferred from homology"/>
<reference key="1">
    <citation type="journal article" date="2001" name="Nature">
        <title>Complete genome sequence of a multiple drug resistant Salmonella enterica serovar Typhi CT18.</title>
        <authorList>
            <person name="Parkhill J."/>
            <person name="Dougan G."/>
            <person name="James K.D."/>
            <person name="Thomson N.R."/>
            <person name="Pickard D."/>
            <person name="Wain J."/>
            <person name="Churcher C.M."/>
            <person name="Mungall K.L."/>
            <person name="Bentley S.D."/>
            <person name="Holden M.T.G."/>
            <person name="Sebaihia M."/>
            <person name="Baker S."/>
            <person name="Basham D."/>
            <person name="Brooks K."/>
            <person name="Chillingworth T."/>
            <person name="Connerton P."/>
            <person name="Cronin A."/>
            <person name="Davis P."/>
            <person name="Davies R.M."/>
            <person name="Dowd L."/>
            <person name="White N."/>
            <person name="Farrar J."/>
            <person name="Feltwell T."/>
            <person name="Hamlin N."/>
            <person name="Haque A."/>
            <person name="Hien T.T."/>
            <person name="Holroyd S."/>
            <person name="Jagels K."/>
            <person name="Krogh A."/>
            <person name="Larsen T.S."/>
            <person name="Leather S."/>
            <person name="Moule S."/>
            <person name="O'Gaora P."/>
            <person name="Parry C."/>
            <person name="Quail M.A."/>
            <person name="Rutherford K.M."/>
            <person name="Simmonds M."/>
            <person name="Skelton J."/>
            <person name="Stevens K."/>
            <person name="Whitehead S."/>
            <person name="Barrell B.G."/>
        </authorList>
    </citation>
    <scope>NUCLEOTIDE SEQUENCE [LARGE SCALE GENOMIC DNA]</scope>
    <source>
        <strain>CT18</strain>
    </source>
</reference>
<reference key="2">
    <citation type="journal article" date="2003" name="J. Bacteriol.">
        <title>Comparative genomics of Salmonella enterica serovar Typhi strains Ty2 and CT18.</title>
        <authorList>
            <person name="Deng W."/>
            <person name="Liou S.-R."/>
            <person name="Plunkett G. III"/>
            <person name="Mayhew G.F."/>
            <person name="Rose D.J."/>
            <person name="Burland V."/>
            <person name="Kodoyianni V."/>
            <person name="Schwartz D.C."/>
            <person name="Blattner F.R."/>
        </authorList>
    </citation>
    <scope>NUCLEOTIDE SEQUENCE [LARGE SCALE GENOMIC DNA]</scope>
    <source>
        <strain>ATCC 700931 / Ty2</strain>
    </source>
</reference>
<keyword id="KW-0963">Cytoplasm</keyword>
<keyword id="KW-0489">Methyltransferase</keyword>
<keyword id="KW-0698">rRNA processing</keyword>
<keyword id="KW-0949">S-adenosyl-L-methionine</keyword>
<keyword id="KW-0808">Transferase</keyword>
<name>RSMH_SALTI</name>
<protein>
    <recommendedName>
        <fullName evidence="1">Ribosomal RNA small subunit methyltransferase H</fullName>
        <ecNumber evidence="1">2.1.1.199</ecNumber>
    </recommendedName>
    <alternativeName>
        <fullName evidence="1">16S rRNA m(4)C1402 methyltransferase</fullName>
    </alternativeName>
    <alternativeName>
        <fullName evidence="1">rRNA (cytosine-N(4)-)-methyltransferase RsmH</fullName>
    </alternativeName>
</protein>
<organism>
    <name type="scientific">Salmonella typhi</name>
    <dbReference type="NCBI Taxonomy" id="90370"/>
    <lineage>
        <taxon>Bacteria</taxon>
        <taxon>Pseudomonadati</taxon>
        <taxon>Pseudomonadota</taxon>
        <taxon>Gammaproteobacteria</taxon>
        <taxon>Enterobacterales</taxon>
        <taxon>Enterobacteriaceae</taxon>
        <taxon>Salmonella</taxon>
    </lineage>
</organism>
<gene>
    <name evidence="1" type="primary">rsmH</name>
    <name type="synonym">mraW</name>
    <name type="ordered locus">STY0140</name>
    <name type="ordered locus">t0124</name>
</gene>
<sequence length="313" mass="34747">MMENFKHTTVLLDEAVNGLNIRPDGIYIDGTFGRGGHSRLILSQLGEEGRLLAIDRDPQAIAVAQTINDPRFSIIHGPFSALADYVAERELTGKIDGILLDLGVSSPQLDDAERGFSFMRDGPLDMRMDPTRGQSAAEWLQTAEEADIAWVLKTFGEERFAKRIAHAIVERNREQPMTRTKELAEVVAAATPVKDKFKHPATRTFQAVRIWVNSELEEIEQALKSSLSVLASGGRLSIISFHSLEDRIVKRFMREQSRGPQVPAGLPMTEAQLKKLGGRELRALGKLMPGEKEVAENPRARSSVLRIAERTNA</sequence>
<comment type="function">
    <text evidence="1">Specifically methylates the N4 position of cytidine in position 1402 (C1402) of 16S rRNA.</text>
</comment>
<comment type="catalytic activity">
    <reaction evidence="1">
        <text>cytidine(1402) in 16S rRNA + S-adenosyl-L-methionine = N(4)-methylcytidine(1402) in 16S rRNA + S-adenosyl-L-homocysteine + H(+)</text>
        <dbReference type="Rhea" id="RHEA:42928"/>
        <dbReference type="Rhea" id="RHEA-COMP:10286"/>
        <dbReference type="Rhea" id="RHEA-COMP:10287"/>
        <dbReference type="ChEBI" id="CHEBI:15378"/>
        <dbReference type="ChEBI" id="CHEBI:57856"/>
        <dbReference type="ChEBI" id="CHEBI:59789"/>
        <dbReference type="ChEBI" id="CHEBI:74506"/>
        <dbReference type="ChEBI" id="CHEBI:82748"/>
        <dbReference type="EC" id="2.1.1.199"/>
    </reaction>
</comment>
<comment type="subcellular location">
    <subcellularLocation>
        <location evidence="1">Cytoplasm</location>
    </subcellularLocation>
</comment>
<comment type="similarity">
    <text evidence="1">Belongs to the methyltransferase superfamily. RsmH family.</text>
</comment>
<evidence type="ECO:0000255" key="1">
    <source>
        <dbReference type="HAMAP-Rule" id="MF_01007"/>
    </source>
</evidence>
<accession>Q8Z9H4</accession>
<feature type="chain" id="PRO_0000108698" description="Ribosomal RNA small subunit methyltransferase H">
    <location>
        <begin position="1"/>
        <end position="313"/>
    </location>
</feature>
<feature type="binding site" evidence="1">
    <location>
        <begin position="35"/>
        <end position="37"/>
    </location>
    <ligand>
        <name>S-adenosyl-L-methionine</name>
        <dbReference type="ChEBI" id="CHEBI:59789"/>
    </ligand>
</feature>
<feature type="binding site" evidence="1">
    <location>
        <position position="55"/>
    </location>
    <ligand>
        <name>S-adenosyl-L-methionine</name>
        <dbReference type="ChEBI" id="CHEBI:59789"/>
    </ligand>
</feature>
<feature type="binding site" evidence="1">
    <location>
        <position position="79"/>
    </location>
    <ligand>
        <name>S-adenosyl-L-methionine</name>
        <dbReference type="ChEBI" id="CHEBI:59789"/>
    </ligand>
</feature>
<feature type="binding site" evidence="1">
    <location>
        <position position="101"/>
    </location>
    <ligand>
        <name>S-adenosyl-L-methionine</name>
        <dbReference type="ChEBI" id="CHEBI:59789"/>
    </ligand>
</feature>
<feature type="binding site" evidence="1">
    <location>
        <position position="108"/>
    </location>
    <ligand>
        <name>S-adenosyl-L-methionine</name>
        <dbReference type="ChEBI" id="CHEBI:59789"/>
    </ligand>
</feature>
<dbReference type="EC" id="2.1.1.199" evidence="1"/>
<dbReference type="EMBL" id="AL513382">
    <property type="protein sequence ID" value="CAD01277.1"/>
    <property type="molecule type" value="Genomic_DNA"/>
</dbReference>
<dbReference type="EMBL" id="AE014613">
    <property type="protein sequence ID" value="AAO67856.1"/>
    <property type="molecule type" value="Genomic_DNA"/>
</dbReference>
<dbReference type="RefSeq" id="NP_454732.1">
    <property type="nucleotide sequence ID" value="NC_003198.1"/>
</dbReference>
<dbReference type="RefSeq" id="WP_000970440.1">
    <property type="nucleotide sequence ID" value="NZ_WSUR01000009.1"/>
</dbReference>
<dbReference type="SMR" id="Q8Z9H4"/>
<dbReference type="STRING" id="220341.gene:17584179"/>
<dbReference type="KEGG" id="stt:t0124"/>
<dbReference type="KEGG" id="sty:STY0140"/>
<dbReference type="PATRIC" id="fig|220341.7.peg.140"/>
<dbReference type="eggNOG" id="COG0275">
    <property type="taxonomic scope" value="Bacteria"/>
</dbReference>
<dbReference type="HOGENOM" id="CLU_038422_2_0_6"/>
<dbReference type="OMA" id="NPAKRTF"/>
<dbReference type="OrthoDB" id="9806637at2"/>
<dbReference type="Proteomes" id="UP000000541">
    <property type="component" value="Chromosome"/>
</dbReference>
<dbReference type="Proteomes" id="UP000002670">
    <property type="component" value="Chromosome"/>
</dbReference>
<dbReference type="GO" id="GO:0005737">
    <property type="term" value="C:cytoplasm"/>
    <property type="evidence" value="ECO:0007669"/>
    <property type="project" value="UniProtKB-SubCell"/>
</dbReference>
<dbReference type="GO" id="GO:0071424">
    <property type="term" value="F:rRNA (cytosine-N4-)-methyltransferase activity"/>
    <property type="evidence" value="ECO:0007669"/>
    <property type="project" value="UniProtKB-UniRule"/>
</dbReference>
<dbReference type="GO" id="GO:0070475">
    <property type="term" value="P:rRNA base methylation"/>
    <property type="evidence" value="ECO:0007669"/>
    <property type="project" value="UniProtKB-UniRule"/>
</dbReference>
<dbReference type="FunFam" id="1.10.150.170:FF:000001">
    <property type="entry name" value="Ribosomal RNA small subunit methyltransferase H"/>
    <property type="match status" value="1"/>
</dbReference>
<dbReference type="Gene3D" id="1.10.150.170">
    <property type="entry name" value="Putative methyltransferase TM0872, insert domain"/>
    <property type="match status" value="1"/>
</dbReference>
<dbReference type="Gene3D" id="3.40.50.150">
    <property type="entry name" value="Vaccinia Virus protein VP39"/>
    <property type="match status" value="1"/>
</dbReference>
<dbReference type="HAMAP" id="MF_01007">
    <property type="entry name" value="16SrRNA_methyltr_H"/>
    <property type="match status" value="1"/>
</dbReference>
<dbReference type="InterPro" id="IPR002903">
    <property type="entry name" value="RsmH"/>
</dbReference>
<dbReference type="InterPro" id="IPR023397">
    <property type="entry name" value="SAM-dep_MeTrfase_MraW_recog"/>
</dbReference>
<dbReference type="InterPro" id="IPR029063">
    <property type="entry name" value="SAM-dependent_MTases_sf"/>
</dbReference>
<dbReference type="NCBIfam" id="TIGR00006">
    <property type="entry name" value="16S rRNA (cytosine(1402)-N(4))-methyltransferase RsmH"/>
    <property type="match status" value="1"/>
</dbReference>
<dbReference type="PANTHER" id="PTHR11265:SF0">
    <property type="entry name" value="12S RRNA N4-METHYLCYTIDINE METHYLTRANSFERASE"/>
    <property type="match status" value="1"/>
</dbReference>
<dbReference type="PANTHER" id="PTHR11265">
    <property type="entry name" value="S-ADENOSYL-METHYLTRANSFERASE MRAW"/>
    <property type="match status" value="1"/>
</dbReference>
<dbReference type="Pfam" id="PF01795">
    <property type="entry name" value="Methyltransf_5"/>
    <property type="match status" value="1"/>
</dbReference>
<dbReference type="PIRSF" id="PIRSF004486">
    <property type="entry name" value="MraW"/>
    <property type="match status" value="1"/>
</dbReference>
<dbReference type="SUPFAM" id="SSF81799">
    <property type="entry name" value="Putative methyltransferase TM0872, insert domain"/>
    <property type="match status" value="1"/>
</dbReference>
<dbReference type="SUPFAM" id="SSF53335">
    <property type="entry name" value="S-adenosyl-L-methionine-dependent methyltransferases"/>
    <property type="match status" value="1"/>
</dbReference>